<gene>
    <name evidence="1" type="primary">proA</name>
    <name type="ordered locus">YPN_0872</name>
    <name type="ORF">YP516_0943</name>
</gene>
<comment type="function">
    <text evidence="1">Catalyzes the NADPH-dependent reduction of L-glutamate 5-phosphate into L-glutamate 5-semialdehyde and phosphate. The product spontaneously undergoes cyclization to form 1-pyrroline-5-carboxylate.</text>
</comment>
<comment type="catalytic activity">
    <reaction evidence="1">
        <text>L-glutamate 5-semialdehyde + phosphate + NADP(+) = L-glutamyl 5-phosphate + NADPH + H(+)</text>
        <dbReference type="Rhea" id="RHEA:19541"/>
        <dbReference type="ChEBI" id="CHEBI:15378"/>
        <dbReference type="ChEBI" id="CHEBI:43474"/>
        <dbReference type="ChEBI" id="CHEBI:57783"/>
        <dbReference type="ChEBI" id="CHEBI:58066"/>
        <dbReference type="ChEBI" id="CHEBI:58274"/>
        <dbReference type="ChEBI" id="CHEBI:58349"/>
        <dbReference type="EC" id="1.2.1.41"/>
    </reaction>
</comment>
<comment type="pathway">
    <text evidence="1">Amino-acid biosynthesis; L-proline biosynthesis; L-glutamate 5-semialdehyde from L-glutamate: step 2/2.</text>
</comment>
<comment type="subcellular location">
    <subcellularLocation>
        <location evidence="1">Cytoplasm</location>
    </subcellularLocation>
</comment>
<comment type="similarity">
    <text evidence="1">Belongs to the gamma-glutamyl phosphate reductase family.</text>
</comment>
<protein>
    <recommendedName>
        <fullName evidence="1">Gamma-glutamyl phosphate reductase</fullName>
        <shortName evidence="1">GPR</shortName>
        <ecNumber evidence="1">1.2.1.41</ecNumber>
    </recommendedName>
    <alternativeName>
        <fullName evidence="1">Glutamate-5-semialdehyde dehydrogenase</fullName>
    </alternativeName>
    <alternativeName>
        <fullName evidence="1">Glutamyl-gamma-semialdehyde dehydrogenase</fullName>
        <shortName evidence="1">GSA dehydrogenase</shortName>
    </alternativeName>
</protein>
<dbReference type="EC" id="1.2.1.41" evidence="1"/>
<dbReference type="EMBL" id="CP000305">
    <property type="protein sequence ID" value="ABG17204.1"/>
    <property type="molecule type" value="Genomic_DNA"/>
</dbReference>
<dbReference type="EMBL" id="ACNQ01000008">
    <property type="protein sequence ID" value="EEO77284.1"/>
    <property type="molecule type" value="Genomic_DNA"/>
</dbReference>
<dbReference type="SMR" id="Q1CLC6"/>
<dbReference type="KEGG" id="ypn:YPN_0872"/>
<dbReference type="HOGENOM" id="CLU_030231_0_0_6"/>
<dbReference type="UniPathway" id="UPA00098">
    <property type="reaction ID" value="UER00360"/>
</dbReference>
<dbReference type="Proteomes" id="UP000008936">
    <property type="component" value="Chromosome"/>
</dbReference>
<dbReference type="GO" id="GO:0005737">
    <property type="term" value="C:cytoplasm"/>
    <property type="evidence" value="ECO:0007669"/>
    <property type="project" value="UniProtKB-SubCell"/>
</dbReference>
<dbReference type="GO" id="GO:0004350">
    <property type="term" value="F:glutamate-5-semialdehyde dehydrogenase activity"/>
    <property type="evidence" value="ECO:0007669"/>
    <property type="project" value="UniProtKB-UniRule"/>
</dbReference>
<dbReference type="GO" id="GO:0050661">
    <property type="term" value="F:NADP binding"/>
    <property type="evidence" value="ECO:0007669"/>
    <property type="project" value="InterPro"/>
</dbReference>
<dbReference type="GO" id="GO:0055129">
    <property type="term" value="P:L-proline biosynthetic process"/>
    <property type="evidence" value="ECO:0007669"/>
    <property type="project" value="UniProtKB-UniRule"/>
</dbReference>
<dbReference type="CDD" id="cd07079">
    <property type="entry name" value="ALDH_F18-19_ProA-GPR"/>
    <property type="match status" value="1"/>
</dbReference>
<dbReference type="FunFam" id="3.40.309.10:FF:000006">
    <property type="entry name" value="Gamma-glutamyl phosphate reductase"/>
    <property type="match status" value="1"/>
</dbReference>
<dbReference type="Gene3D" id="3.40.605.10">
    <property type="entry name" value="Aldehyde Dehydrogenase, Chain A, domain 1"/>
    <property type="match status" value="1"/>
</dbReference>
<dbReference type="Gene3D" id="3.40.309.10">
    <property type="entry name" value="Aldehyde Dehydrogenase, Chain A, domain 2"/>
    <property type="match status" value="1"/>
</dbReference>
<dbReference type="HAMAP" id="MF_00412">
    <property type="entry name" value="ProA"/>
    <property type="match status" value="1"/>
</dbReference>
<dbReference type="InterPro" id="IPR016161">
    <property type="entry name" value="Ald_DH/histidinol_DH"/>
</dbReference>
<dbReference type="InterPro" id="IPR016163">
    <property type="entry name" value="Ald_DH_C"/>
</dbReference>
<dbReference type="InterPro" id="IPR016162">
    <property type="entry name" value="Ald_DH_N"/>
</dbReference>
<dbReference type="InterPro" id="IPR015590">
    <property type="entry name" value="Aldehyde_DH_dom"/>
</dbReference>
<dbReference type="InterPro" id="IPR020593">
    <property type="entry name" value="G-glutamylP_reductase_CS"/>
</dbReference>
<dbReference type="InterPro" id="IPR012134">
    <property type="entry name" value="Glu-5-SA_DH"/>
</dbReference>
<dbReference type="InterPro" id="IPR000965">
    <property type="entry name" value="GPR_dom"/>
</dbReference>
<dbReference type="NCBIfam" id="NF001221">
    <property type="entry name" value="PRK00197.1"/>
    <property type="match status" value="1"/>
</dbReference>
<dbReference type="NCBIfam" id="TIGR00407">
    <property type="entry name" value="proA"/>
    <property type="match status" value="1"/>
</dbReference>
<dbReference type="PANTHER" id="PTHR11063:SF8">
    <property type="entry name" value="DELTA-1-PYRROLINE-5-CARBOXYLATE SYNTHASE"/>
    <property type="match status" value="1"/>
</dbReference>
<dbReference type="PANTHER" id="PTHR11063">
    <property type="entry name" value="GLUTAMATE SEMIALDEHYDE DEHYDROGENASE"/>
    <property type="match status" value="1"/>
</dbReference>
<dbReference type="Pfam" id="PF00171">
    <property type="entry name" value="Aldedh"/>
    <property type="match status" value="1"/>
</dbReference>
<dbReference type="PIRSF" id="PIRSF000151">
    <property type="entry name" value="GPR"/>
    <property type="match status" value="1"/>
</dbReference>
<dbReference type="SUPFAM" id="SSF53720">
    <property type="entry name" value="ALDH-like"/>
    <property type="match status" value="1"/>
</dbReference>
<dbReference type="PROSITE" id="PS01223">
    <property type="entry name" value="PROA"/>
    <property type="match status" value="1"/>
</dbReference>
<feature type="chain" id="PRO_1000050006" description="Gamma-glutamyl phosphate reductase">
    <location>
        <begin position="1"/>
        <end position="419"/>
    </location>
</feature>
<organism>
    <name type="scientific">Yersinia pestis bv. Antiqua (strain Nepal516)</name>
    <dbReference type="NCBI Taxonomy" id="377628"/>
    <lineage>
        <taxon>Bacteria</taxon>
        <taxon>Pseudomonadati</taxon>
        <taxon>Pseudomonadota</taxon>
        <taxon>Gammaproteobacteria</taxon>
        <taxon>Enterobacterales</taxon>
        <taxon>Yersiniaceae</taxon>
        <taxon>Yersinia</taxon>
    </lineage>
</organism>
<keyword id="KW-0028">Amino-acid biosynthesis</keyword>
<keyword id="KW-0963">Cytoplasm</keyword>
<keyword id="KW-0521">NADP</keyword>
<keyword id="KW-0560">Oxidoreductase</keyword>
<keyword id="KW-0641">Proline biosynthesis</keyword>
<name>PROA_YERPN</name>
<sequence length="419" mass="45343">MNLLEHMGKAAKQASWQLAMLSTAKKNQALAVIANLLESESQTILQANERDMAAARESGMSEALLDRLLLTPARLAAIANDVRQVCRLNDPVGRVIDGSLLDSGLKLERRRVPLGVIGVIYEARPNVTIDVASLCLKTGNAVILRGGKETHYTNQATVNVIQRALEQCGLPAAAVQAIESPDRQLVNELLRLDRYVDMLIPRGGASLHKLCREQSTIPVITGGIGVCHTFVDENADFEKALLVIENAKIQRPSACNSLETLLVHQAVAKTFLPLLSARMHAFGVTLHASPLAMPYLADGKAKVVAVEAADYDDEWLSLDLNVDIVTDIDAAIDHIREHGTSHSDAILTRSLSHAEYFVRAVDSSAVYVNASTRFTDGGQFGLGAEVAVSTQKLHARGPMGLDALTTYKWIGYGDDLVRS</sequence>
<proteinExistence type="inferred from homology"/>
<accession>Q1CLC6</accession>
<accession>C4GQE3</accession>
<reference key="1">
    <citation type="journal article" date="2006" name="J. Bacteriol.">
        <title>Complete genome sequence of Yersinia pestis strains Antiqua and Nepal516: evidence of gene reduction in an emerging pathogen.</title>
        <authorList>
            <person name="Chain P.S.G."/>
            <person name="Hu P."/>
            <person name="Malfatti S.A."/>
            <person name="Radnedge L."/>
            <person name="Larimer F."/>
            <person name="Vergez L.M."/>
            <person name="Worsham P."/>
            <person name="Chu M.C."/>
            <person name="Andersen G.L."/>
        </authorList>
    </citation>
    <scope>NUCLEOTIDE SEQUENCE [LARGE SCALE GENOMIC DNA]</scope>
    <source>
        <strain>Nepal516</strain>
    </source>
</reference>
<reference key="2">
    <citation type="submission" date="2009-04" db="EMBL/GenBank/DDBJ databases">
        <title>Yersinia pestis Nepal516A whole genome shotgun sequencing project.</title>
        <authorList>
            <person name="Plunkett G. III"/>
            <person name="Anderson B.D."/>
            <person name="Baumler D.J."/>
            <person name="Burland V."/>
            <person name="Cabot E.L."/>
            <person name="Glasner J.D."/>
            <person name="Mau B."/>
            <person name="Neeno-Eckwall E."/>
            <person name="Perna N.T."/>
            <person name="Munk A.C."/>
            <person name="Tapia R."/>
            <person name="Green L.D."/>
            <person name="Rogers Y.C."/>
            <person name="Detter J.C."/>
            <person name="Bruce D.C."/>
            <person name="Brettin T.S."/>
        </authorList>
    </citation>
    <scope>NUCLEOTIDE SEQUENCE [LARGE SCALE GENOMIC DNA]</scope>
    <source>
        <strain>Nepal516</strain>
    </source>
</reference>
<evidence type="ECO:0000255" key="1">
    <source>
        <dbReference type="HAMAP-Rule" id="MF_00412"/>
    </source>
</evidence>